<dbReference type="EC" id="2.4.2.1" evidence="2"/>
<dbReference type="EMBL" id="AY900166">
    <property type="protein sequence ID" value="AAW82755.2"/>
    <property type="molecule type" value="Genomic_DNA"/>
</dbReference>
<dbReference type="RefSeq" id="WP_000110707.1">
    <property type="nucleotide sequence ID" value="NZ_WBPP01000015.1"/>
</dbReference>
<dbReference type="PDB" id="3UAV">
    <property type="method" value="X-ray"/>
    <property type="resolution" value="1.40 A"/>
    <property type="chains" value="A=1-235"/>
</dbReference>
<dbReference type="PDB" id="3UAW">
    <property type="method" value="X-ray"/>
    <property type="resolution" value="1.20 A"/>
    <property type="chains" value="A=1-235"/>
</dbReference>
<dbReference type="PDB" id="3UAX">
    <property type="method" value="X-ray"/>
    <property type="resolution" value="1.20 A"/>
    <property type="chains" value="A=1-235"/>
</dbReference>
<dbReference type="PDB" id="3UAY">
    <property type="method" value="X-ray"/>
    <property type="resolution" value="1.40 A"/>
    <property type="chains" value="A=1-235"/>
</dbReference>
<dbReference type="PDB" id="3UAZ">
    <property type="method" value="X-ray"/>
    <property type="resolution" value="1.40 A"/>
    <property type="chains" value="A=1-235"/>
</dbReference>
<dbReference type="PDBsum" id="3UAV"/>
<dbReference type="PDBsum" id="3UAW"/>
<dbReference type="PDBsum" id="3UAX"/>
<dbReference type="PDBsum" id="3UAY"/>
<dbReference type="PDBsum" id="3UAZ"/>
<dbReference type="SMR" id="Q5EEL8"/>
<dbReference type="GeneID" id="93009578"/>
<dbReference type="eggNOG" id="COG0813">
    <property type="taxonomic scope" value="Bacteria"/>
</dbReference>
<dbReference type="OMA" id="PQCLLCG"/>
<dbReference type="OrthoDB" id="9782889at2"/>
<dbReference type="EvolutionaryTrace" id="Q5EEL8"/>
<dbReference type="GO" id="GO:0005829">
    <property type="term" value="C:cytosol"/>
    <property type="evidence" value="ECO:0007669"/>
    <property type="project" value="TreeGrafter"/>
</dbReference>
<dbReference type="GO" id="GO:0004731">
    <property type="term" value="F:purine-nucleoside phosphorylase activity"/>
    <property type="evidence" value="ECO:0007669"/>
    <property type="project" value="UniProtKB-UniRule"/>
</dbReference>
<dbReference type="GO" id="GO:0006152">
    <property type="term" value="P:purine nucleoside catabolic process"/>
    <property type="evidence" value="ECO:0007669"/>
    <property type="project" value="TreeGrafter"/>
</dbReference>
<dbReference type="CDD" id="cd09006">
    <property type="entry name" value="PNP_EcPNPI-like"/>
    <property type="match status" value="1"/>
</dbReference>
<dbReference type="Gene3D" id="3.40.50.1580">
    <property type="entry name" value="Nucleoside phosphorylase domain"/>
    <property type="match status" value="1"/>
</dbReference>
<dbReference type="HAMAP" id="MF_01627">
    <property type="entry name" value="Pur_nucleosid_phosp"/>
    <property type="match status" value="1"/>
</dbReference>
<dbReference type="InterPro" id="IPR004402">
    <property type="entry name" value="DeoD-type"/>
</dbReference>
<dbReference type="InterPro" id="IPR018016">
    <property type="entry name" value="Nucleoside_phosphorylase_CS"/>
</dbReference>
<dbReference type="InterPro" id="IPR000845">
    <property type="entry name" value="Nucleoside_phosphorylase_d"/>
</dbReference>
<dbReference type="InterPro" id="IPR035994">
    <property type="entry name" value="Nucleoside_phosphorylase_sf"/>
</dbReference>
<dbReference type="NCBIfam" id="TIGR00107">
    <property type="entry name" value="deoD"/>
    <property type="match status" value="1"/>
</dbReference>
<dbReference type="NCBIfam" id="NF004489">
    <property type="entry name" value="PRK05819.1"/>
    <property type="match status" value="1"/>
</dbReference>
<dbReference type="NCBIfam" id="NF009914">
    <property type="entry name" value="PRK13374.1"/>
    <property type="match status" value="1"/>
</dbReference>
<dbReference type="PANTHER" id="PTHR43691:SF11">
    <property type="entry name" value="FI09636P-RELATED"/>
    <property type="match status" value="1"/>
</dbReference>
<dbReference type="PANTHER" id="PTHR43691">
    <property type="entry name" value="URIDINE PHOSPHORYLASE"/>
    <property type="match status" value="1"/>
</dbReference>
<dbReference type="Pfam" id="PF01048">
    <property type="entry name" value="PNP_UDP_1"/>
    <property type="match status" value="1"/>
</dbReference>
<dbReference type="SUPFAM" id="SSF53167">
    <property type="entry name" value="Purine and uridine phosphorylases"/>
    <property type="match status" value="1"/>
</dbReference>
<dbReference type="PROSITE" id="PS01232">
    <property type="entry name" value="PNP_UDP_1"/>
    <property type="match status" value="1"/>
</dbReference>
<evidence type="ECO:0000250" key="1">
    <source>
        <dbReference type="UniProtKB" id="P50389"/>
    </source>
</evidence>
<evidence type="ECO:0000255" key="2">
    <source>
        <dbReference type="HAMAP-Rule" id="MF_01627"/>
    </source>
</evidence>
<evidence type="ECO:0007829" key="3">
    <source>
        <dbReference type="PDB" id="3UAW"/>
    </source>
</evidence>
<evidence type="ECO:0007829" key="4">
    <source>
        <dbReference type="PDB" id="3UAX"/>
    </source>
</evidence>
<feature type="chain" id="PRO_0000063115" description="Purine nucleoside phosphorylase DeoD-type">
    <location>
        <begin position="1"/>
        <end position="235"/>
    </location>
</feature>
<feature type="active site" description="Proton donor" evidence="2">
    <location>
        <position position="204"/>
    </location>
</feature>
<feature type="binding site" evidence="1">
    <location>
        <position position="4"/>
    </location>
    <ligand>
        <name>a purine D-ribonucleoside</name>
        <dbReference type="ChEBI" id="CHEBI:142355"/>
        <note>ligand shared between dimeric partners</note>
    </ligand>
</feature>
<feature type="binding site" description="in other chain" evidence="1">
    <location>
        <position position="20"/>
    </location>
    <ligand>
        <name>phosphate</name>
        <dbReference type="ChEBI" id="CHEBI:43474"/>
        <note>ligand shared between dimeric partners</note>
    </ligand>
</feature>
<feature type="binding site" description="in other chain" evidence="1">
    <location>
        <position position="24"/>
    </location>
    <ligand>
        <name>phosphate</name>
        <dbReference type="ChEBI" id="CHEBI:43474"/>
        <note>ligand shared between dimeric partners</note>
    </ligand>
</feature>
<feature type="binding site" evidence="1">
    <location>
        <position position="43"/>
    </location>
    <ligand>
        <name>phosphate</name>
        <dbReference type="ChEBI" id="CHEBI:43474"/>
        <note>ligand shared between dimeric partners</note>
    </ligand>
</feature>
<feature type="binding site" description="in other chain" evidence="1">
    <location>
        <begin position="87"/>
        <end position="90"/>
    </location>
    <ligand>
        <name>phosphate</name>
        <dbReference type="ChEBI" id="CHEBI:43474"/>
        <note>ligand shared between dimeric partners</note>
    </ligand>
</feature>
<feature type="binding site" description="in other chain" evidence="1">
    <location>
        <position position="162"/>
    </location>
    <ligand>
        <name>a purine D-ribonucleoside</name>
        <dbReference type="ChEBI" id="CHEBI:142355"/>
        <note>ligand shared between dimeric partners</note>
    </ligand>
</feature>
<feature type="binding site" description="in other chain" evidence="1">
    <location>
        <begin position="179"/>
        <end position="181"/>
    </location>
    <ligand>
        <name>a purine D-ribonucleoside</name>
        <dbReference type="ChEBI" id="CHEBI:142355"/>
        <note>ligand shared between dimeric partners</note>
    </ligand>
</feature>
<feature type="binding site" description="in other chain" evidence="1">
    <location>
        <begin position="203"/>
        <end position="204"/>
    </location>
    <ligand>
        <name>a purine D-ribonucleoside</name>
        <dbReference type="ChEBI" id="CHEBI:142355"/>
        <note>ligand shared between dimeric partners</note>
    </ligand>
</feature>
<feature type="site" description="Important for catalytic activity" evidence="2">
    <location>
        <position position="217"/>
    </location>
</feature>
<feature type="strand" evidence="3">
    <location>
        <begin position="14"/>
        <end position="18"/>
    </location>
</feature>
<feature type="helix" evidence="3">
    <location>
        <begin position="22"/>
        <end position="32"/>
    </location>
</feature>
<feature type="strand" evidence="3">
    <location>
        <begin position="34"/>
        <end position="40"/>
    </location>
</feature>
<feature type="helix" evidence="3">
    <location>
        <begin position="42"/>
        <end position="44"/>
    </location>
</feature>
<feature type="strand" evidence="3">
    <location>
        <begin position="47"/>
        <end position="52"/>
    </location>
</feature>
<feature type="strand" evidence="3">
    <location>
        <begin position="55"/>
        <end position="60"/>
    </location>
</feature>
<feature type="helix" evidence="3">
    <location>
        <begin position="66"/>
        <end position="80"/>
    </location>
</feature>
<feature type="strand" evidence="3">
    <location>
        <begin position="84"/>
        <end position="93"/>
    </location>
</feature>
<feature type="strand" evidence="4">
    <location>
        <begin position="95"/>
        <end position="98"/>
    </location>
</feature>
<feature type="strand" evidence="3">
    <location>
        <begin position="103"/>
        <end position="112"/>
    </location>
</feature>
<feature type="helix" evidence="3">
    <location>
        <begin position="115"/>
        <end position="119"/>
    </location>
</feature>
<feature type="helix" evidence="3">
    <location>
        <begin position="131"/>
        <end position="144"/>
    </location>
</feature>
<feature type="strand" evidence="3">
    <location>
        <begin position="148"/>
        <end position="155"/>
    </location>
</feature>
<feature type="helix" evidence="3">
    <location>
        <begin position="165"/>
        <end position="172"/>
    </location>
</feature>
<feature type="strand" evidence="3">
    <location>
        <begin position="177"/>
        <end position="181"/>
    </location>
</feature>
<feature type="helix" evidence="3">
    <location>
        <begin position="182"/>
        <end position="192"/>
    </location>
</feature>
<feature type="strand" evidence="3">
    <location>
        <begin position="195"/>
        <end position="205"/>
    </location>
</feature>
<feature type="turn" evidence="3">
    <location>
        <begin position="206"/>
        <end position="208"/>
    </location>
</feature>
<feature type="helix" evidence="3">
    <location>
        <begin position="215"/>
        <end position="217"/>
    </location>
</feature>
<feature type="helix" evidence="3">
    <location>
        <begin position="218"/>
        <end position="232"/>
    </location>
</feature>
<keyword id="KW-0002">3D-structure</keyword>
<keyword id="KW-0328">Glycosyltransferase</keyword>
<keyword id="KW-0808">Transferase</keyword>
<gene>
    <name evidence="2" type="primary">deoD</name>
</gene>
<reference key="1">
    <citation type="submission" date="2005-01" db="EMBL/GenBank/DDBJ databases">
        <title>Cloning and expression of adenosine phosphorylase of Bacillus cereus NCIB 8122.</title>
        <authorList>
            <person name="Frassetto L."/>
            <person name="Rinaldo-Matthis A."/>
            <person name="Allegrini S."/>
            <person name="Carta M.C."/>
            <person name="Tozzi M.G."/>
            <person name="Sgarrella F."/>
        </authorList>
    </citation>
    <scope>NUCLEOTIDE SEQUENCE [GENOMIC DNA]</scope>
    <source>
        <strain>ATCC 10702 / DSM 487 / NBRC 3466 / NCIMB 8122 / NCTC 8035 / FDA 5</strain>
    </source>
</reference>
<reference key="2">
    <citation type="submission" date="2009-02" db="EMBL/GenBank/DDBJ databases">
        <authorList>
            <person name="Frassetto L."/>
            <person name="Allegrini S."/>
            <person name="Sgarrella F."/>
        </authorList>
    </citation>
    <scope>SEQUENCE REVISION TO 16</scope>
</reference>
<sequence length="235" mass="25675">MSVHIEAKQGEIAESILLPGDPLRAKYIAETFLEDVTCYNNVRGMLGFTGTYKGKRVSVQGTGMGVPSISIYVNELIQSYGVKNLIRVGTCGAIQKDVKVRDVIIAMTACTDSNMNRLTFPGFDFAPAANFDLLKKAYDAGTEKGLHVRVGNVLTADVFYRESMDMVKKLGDYGVLAVEMETTALYTLAAKYGVNALSVLTVSDHIFTGEETTSEERQTTFNEMIEIALDAAIQQ</sequence>
<comment type="function">
    <text evidence="2">Catalyzes the reversible phosphorolytic breakdown of the N-glycosidic bond in the beta-(deoxy)ribonucleoside molecules, with the formation of the corresponding free purine bases and pentose-1-phosphate.</text>
</comment>
<comment type="catalytic activity">
    <reaction evidence="2">
        <text>a purine D-ribonucleoside + phosphate = a purine nucleobase + alpha-D-ribose 1-phosphate</text>
        <dbReference type="Rhea" id="RHEA:19805"/>
        <dbReference type="ChEBI" id="CHEBI:26386"/>
        <dbReference type="ChEBI" id="CHEBI:43474"/>
        <dbReference type="ChEBI" id="CHEBI:57720"/>
        <dbReference type="ChEBI" id="CHEBI:142355"/>
        <dbReference type="EC" id="2.4.2.1"/>
    </reaction>
</comment>
<comment type="catalytic activity">
    <reaction evidence="2">
        <text>a purine 2'-deoxy-D-ribonucleoside + phosphate = a purine nucleobase + 2-deoxy-alpha-D-ribose 1-phosphate</text>
        <dbReference type="Rhea" id="RHEA:36431"/>
        <dbReference type="ChEBI" id="CHEBI:26386"/>
        <dbReference type="ChEBI" id="CHEBI:43474"/>
        <dbReference type="ChEBI" id="CHEBI:57259"/>
        <dbReference type="ChEBI" id="CHEBI:142361"/>
        <dbReference type="EC" id="2.4.2.1"/>
    </reaction>
</comment>
<comment type="subunit">
    <text evidence="2">Homohexamer; trimer of homodimers.</text>
</comment>
<comment type="similarity">
    <text evidence="2">Belongs to the PNP/UDP phosphorylase family.</text>
</comment>
<proteinExistence type="evidence at protein level"/>
<accession>Q5EEL8</accession>
<name>DEOD_BACCE</name>
<organism>
    <name type="scientific">Bacillus cereus</name>
    <dbReference type="NCBI Taxonomy" id="1396"/>
    <lineage>
        <taxon>Bacteria</taxon>
        <taxon>Bacillati</taxon>
        <taxon>Bacillota</taxon>
        <taxon>Bacilli</taxon>
        <taxon>Bacillales</taxon>
        <taxon>Bacillaceae</taxon>
        <taxon>Bacillus</taxon>
        <taxon>Bacillus cereus group</taxon>
    </lineage>
</organism>
<protein>
    <recommendedName>
        <fullName evidence="2">Purine nucleoside phosphorylase DeoD-type</fullName>
        <shortName evidence="2">PNP</shortName>
        <ecNumber evidence="2">2.4.2.1</ecNumber>
    </recommendedName>
</protein>